<name>HIS1_PROM0</name>
<keyword id="KW-0028">Amino-acid biosynthesis</keyword>
<keyword id="KW-0067">ATP-binding</keyword>
<keyword id="KW-0963">Cytoplasm</keyword>
<keyword id="KW-0328">Glycosyltransferase</keyword>
<keyword id="KW-0368">Histidine biosynthesis</keyword>
<keyword id="KW-0547">Nucleotide-binding</keyword>
<keyword id="KW-1185">Reference proteome</keyword>
<keyword id="KW-0808">Transferase</keyword>
<protein>
    <recommendedName>
        <fullName evidence="1">ATP phosphoribosyltransferase</fullName>
        <shortName evidence="1">ATP-PRT</shortName>
        <shortName evidence="1">ATP-PRTase</shortName>
        <ecNumber evidence="1">2.4.2.17</ecNumber>
    </recommendedName>
</protein>
<accession>A3PBT4</accession>
<comment type="function">
    <text evidence="1">Catalyzes the condensation of ATP and 5-phosphoribose 1-diphosphate to form N'-(5'-phosphoribosyl)-ATP (PR-ATP). Has a crucial role in the pathway because the rate of histidine biosynthesis seems to be controlled primarily by regulation of HisG enzymatic activity.</text>
</comment>
<comment type="catalytic activity">
    <reaction evidence="1">
        <text>1-(5-phospho-beta-D-ribosyl)-ATP + diphosphate = 5-phospho-alpha-D-ribose 1-diphosphate + ATP</text>
        <dbReference type="Rhea" id="RHEA:18473"/>
        <dbReference type="ChEBI" id="CHEBI:30616"/>
        <dbReference type="ChEBI" id="CHEBI:33019"/>
        <dbReference type="ChEBI" id="CHEBI:58017"/>
        <dbReference type="ChEBI" id="CHEBI:73183"/>
        <dbReference type="EC" id="2.4.2.17"/>
    </reaction>
</comment>
<comment type="pathway">
    <text evidence="1">Amino-acid biosynthesis; L-histidine biosynthesis; L-histidine from 5-phospho-alpha-D-ribose 1-diphosphate: step 1/9.</text>
</comment>
<comment type="subunit">
    <text evidence="1">Heteromultimer composed of HisG and HisZ subunits.</text>
</comment>
<comment type="subcellular location">
    <subcellularLocation>
        <location evidence="1">Cytoplasm</location>
    </subcellularLocation>
</comment>
<comment type="domain">
    <text>Lacks the C-terminal regulatory region which is replaced by HisZ.</text>
</comment>
<comment type="similarity">
    <text evidence="1">Belongs to the ATP phosphoribosyltransferase family. Short subfamily.</text>
</comment>
<gene>
    <name evidence="1" type="primary">hisG</name>
    <name type="ordered locus">P9301_05861</name>
</gene>
<evidence type="ECO:0000255" key="1">
    <source>
        <dbReference type="HAMAP-Rule" id="MF_01018"/>
    </source>
</evidence>
<reference key="1">
    <citation type="journal article" date="2007" name="PLoS Genet.">
        <title>Patterns and implications of gene gain and loss in the evolution of Prochlorococcus.</title>
        <authorList>
            <person name="Kettler G.C."/>
            <person name="Martiny A.C."/>
            <person name="Huang K."/>
            <person name="Zucker J."/>
            <person name="Coleman M.L."/>
            <person name="Rodrigue S."/>
            <person name="Chen F."/>
            <person name="Lapidus A."/>
            <person name="Ferriera S."/>
            <person name="Johnson J."/>
            <person name="Steglich C."/>
            <person name="Church G.M."/>
            <person name="Richardson P."/>
            <person name="Chisholm S.W."/>
        </authorList>
    </citation>
    <scope>NUCLEOTIDE SEQUENCE [LARGE SCALE GENOMIC DNA]</scope>
    <source>
        <strain>MIT 9301</strain>
    </source>
</reference>
<sequence length="212" mass="23230">MFTIALPKGALLKDSISTFKRAGLDFSDALEKNNRSLTFESNCKRAKALLVRNGDVPVYVSYGQADLGIVGYDVLRESELKVAKLLDLGFGGCHMSLAVKKNSNYLKPTDLPANCKVASKFIKTARFYFEELNIPVEIVHLTGSVELGPITGMAEAIVDLVATGKTLKENGLIKIDDLFYSTARLIGNPLSMRLDDNHLRDTILSIESTNDT</sequence>
<organism>
    <name type="scientific">Prochlorococcus marinus (strain MIT 9301)</name>
    <dbReference type="NCBI Taxonomy" id="167546"/>
    <lineage>
        <taxon>Bacteria</taxon>
        <taxon>Bacillati</taxon>
        <taxon>Cyanobacteriota</taxon>
        <taxon>Cyanophyceae</taxon>
        <taxon>Synechococcales</taxon>
        <taxon>Prochlorococcaceae</taxon>
        <taxon>Prochlorococcus</taxon>
    </lineage>
</organism>
<proteinExistence type="inferred from homology"/>
<dbReference type="EC" id="2.4.2.17" evidence="1"/>
<dbReference type="EMBL" id="CP000576">
    <property type="protein sequence ID" value="ABO17209.1"/>
    <property type="molecule type" value="Genomic_DNA"/>
</dbReference>
<dbReference type="RefSeq" id="WP_011862576.1">
    <property type="nucleotide sequence ID" value="NC_009091.1"/>
</dbReference>
<dbReference type="SMR" id="A3PBT4"/>
<dbReference type="STRING" id="167546.P9301_05861"/>
<dbReference type="KEGG" id="pmg:P9301_05861"/>
<dbReference type="eggNOG" id="COG0040">
    <property type="taxonomic scope" value="Bacteria"/>
</dbReference>
<dbReference type="HOGENOM" id="CLU_038115_2_0_3"/>
<dbReference type="OrthoDB" id="9801867at2"/>
<dbReference type="UniPathway" id="UPA00031">
    <property type="reaction ID" value="UER00006"/>
</dbReference>
<dbReference type="Proteomes" id="UP000001430">
    <property type="component" value="Chromosome"/>
</dbReference>
<dbReference type="GO" id="GO:0005737">
    <property type="term" value="C:cytoplasm"/>
    <property type="evidence" value="ECO:0007669"/>
    <property type="project" value="UniProtKB-SubCell"/>
</dbReference>
<dbReference type="GO" id="GO:0005524">
    <property type="term" value="F:ATP binding"/>
    <property type="evidence" value="ECO:0007669"/>
    <property type="project" value="UniProtKB-KW"/>
</dbReference>
<dbReference type="GO" id="GO:0003879">
    <property type="term" value="F:ATP phosphoribosyltransferase activity"/>
    <property type="evidence" value="ECO:0007669"/>
    <property type="project" value="UniProtKB-UniRule"/>
</dbReference>
<dbReference type="GO" id="GO:0000105">
    <property type="term" value="P:L-histidine biosynthetic process"/>
    <property type="evidence" value="ECO:0007669"/>
    <property type="project" value="UniProtKB-UniRule"/>
</dbReference>
<dbReference type="CDD" id="cd13595">
    <property type="entry name" value="PBP2_HisGs"/>
    <property type="match status" value="1"/>
</dbReference>
<dbReference type="FunFam" id="3.40.190.10:FF:000008">
    <property type="entry name" value="ATP phosphoribosyltransferase"/>
    <property type="match status" value="1"/>
</dbReference>
<dbReference type="Gene3D" id="3.40.190.10">
    <property type="entry name" value="Periplasmic binding protein-like II"/>
    <property type="match status" value="2"/>
</dbReference>
<dbReference type="HAMAP" id="MF_01018">
    <property type="entry name" value="HisG_Short"/>
    <property type="match status" value="1"/>
</dbReference>
<dbReference type="InterPro" id="IPR013820">
    <property type="entry name" value="ATP_PRibTrfase_cat"/>
</dbReference>
<dbReference type="InterPro" id="IPR018198">
    <property type="entry name" value="ATP_PRibTrfase_CS"/>
</dbReference>
<dbReference type="InterPro" id="IPR001348">
    <property type="entry name" value="ATP_PRibTrfase_HisG"/>
</dbReference>
<dbReference type="InterPro" id="IPR024893">
    <property type="entry name" value="ATP_PRibTrfase_HisG_short"/>
</dbReference>
<dbReference type="NCBIfam" id="TIGR00070">
    <property type="entry name" value="hisG"/>
    <property type="match status" value="1"/>
</dbReference>
<dbReference type="PANTHER" id="PTHR21403:SF8">
    <property type="entry name" value="ATP PHOSPHORIBOSYLTRANSFERASE"/>
    <property type="match status" value="1"/>
</dbReference>
<dbReference type="PANTHER" id="PTHR21403">
    <property type="entry name" value="ATP PHOSPHORIBOSYLTRANSFERASE ATP-PRTASE"/>
    <property type="match status" value="1"/>
</dbReference>
<dbReference type="Pfam" id="PF01634">
    <property type="entry name" value="HisG"/>
    <property type="match status" value="1"/>
</dbReference>
<dbReference type="SUPFAM" id="SSF53850">
    <property type="entry name" value="Periplasmic binding protein-like II"/>
    <property type="match status" value="1"/>
</dbReference>
<dbReference type="PROSITE" id="PS01316">
    <property type="entry name" value="ATP_P_PHORIBOSYLTR"/>
    <property type="match status" value="1"/>
</dbReference>
<feature type="chain" id="PRO_1000063292" description="ATP phosphoribosyltransferase">
    <location>
        <begin position="1"/>
        <end position="212"/>
    </location>
</feature>